<keyword id="KW-0963">Cytoplasm</keyword>
<keyword id="KW-0227">DNA damage</keyword>
<keyword id="KW-0234">DNA repair</keyword>
<keyword id="KW-0378">Hydrolase</keyword>
<gene>
    <name evidence="1" type="primary">ung</name>
    <name type="ordered locus">PEPE_0469</name>
</gene>
<protein>
    <recommendedName>
        <fullName evidence="1">Uracil-DNA glycosylase</fullName>
        <shortName evidence="1">UDG</shortName>
        <ecNumber evidence="1">3.2.2.27</ecNumber>
    </recommendedName>
</protein>
<name>UNG_PEDPA</name>
<accession>Q03GV8</accession>
<reference key="1">
    <citation type="journal article" date="2006" name="Proc. Natl. Acad. Sci. U.S.A.">
        <title>Comparative genomics of the lactic acid bacteria.</title>
        <authorList>
            <person name="Makarova K.S."/>
            <person name="Slesarev A."/>
            <person name="Wolf Y.I."/>
            <person name="Sorokin A."/>
            <person name="Mirkin B."/>
            <person name="Koonin E.V."/>
            <person name="Pavlov A."/>
            <person name="Pavlova N."/>
            <person name="Karamychev V."/>
            <person name="Polouchine N."/>
            <person name="Shakhova V."/>
            <person name="Grigoriev I."/>
            <person name="Lou Y."/>
            <person name="Rohksar D."/>
            <person name="Lucas S."/>
            <person name="Huang K."/>
            <person name="Goodstein D.M."/>
            <person name="Hawkins T."/>
            <person name="Plengvidhya V."/>
            <person name="Welker D."/>
            <person name="Hughes J."/>
            <person name="Goh Y."/>
            <person name="Benson A."/>
            <person name="Baldwin K."/>
            <person name="Lee J.-H."/>
            <person name="Diaz-Muniz I."/>
            <person name="Dosti B."/>
            <person name="Smeianov V."/>
            <person name="Wechter W."/>
            <person name="Barabote R."/>
            <person name="Lorca G."/>
            <person name="Altermann E."/>
            <person name="Barrangou R."/>
            <person name="Ganesan B."/>
            <person name="Xie Y."/>
            <person name="Rawsthorne H."/>
            <person name="Tamir D."/>
            <person name="Parker C."/>
            <person name="Breidt F."/>
            <person name="Broadbent J.R."/>
            <person name="Hutkins R."/>
            <person name="O'Sullivan D."/>
            <person name="Steele J."/>
            <person name="Unlu G."/>
            <person name="Saier M.H. Jr."/>
            <person name="Klaenhammer T."/>
            <person name="Richardson P."/>
            <person name="Kozyavkin S."/>
            <person name="Weimer B.C."/>
            <person name="Mills D.A."/>
        </authorList>
    </citation>
    <scope>NUCLEOTIDE SEQUENCE [LARGE SCALE GENOMIC DNA]</scope>
    <source>
        <strain>ATCC 25745 / CCUG 21536 / LMG 10740 / 183-1w</strain>
    </source>
</reference>
<comment type="function">
    <text evidence="1">Excises uracil residues from the DNA which can arise as a result of misincorporation of dUMP residues by DNA polymerase or due to deamination of cytosine.</text>
</comment>
<comment type="catalytic activity">
    <reaction evidence="1">
        <text>Hydrolyzes single-stranded DNA or mismatched double-stranded DNA and polynucleotides, releasing free uracil.</text>
        <dbReference type="EC" id="3.2.2.27"/>
    </reaction>
</comment>
<comment type="subcellular location">
    <subcellularLocation>
        <location evidence="1">Cytoplasm</location>
    </subcellularLocation>
</comment>
<comment type="similarity">
    <text evidence="1">Belongs to the uracil-DNA glycosylase (UDG) superfamily. UNG family.</text>
</comment>
<sequence length="230" mass="26275">MKKIIHNDWQDVLQGEFEQAYYAKLHEFLKHEYATQNIHPDMYHIFQAFEWTPFSKVKVVILGQDPYHGQNQAHGLSFSVQPGVQVPPSLQNIYKELQSDLGIAPVQHGYLKKWADQGVLLLNSVLTVRDGQAYSHQGHGWERLTDTAIQALSEREQPVVFILWGKAARDKIKLIDQSRNIIIQSAHPSPLSAYRGFFGSKPFSKTNEALEAMGETPIDWQLPTEVLEEK</sequence>
<evidence type="ECO:0000255" key="1">
    <source>
        <dbReference type="HAMAP-Rule" id="MF_00148"/>
    </source>
</evidence>
<proteinExistence type="inferred from homology"/>
<feature type="chain" id="PRO_1000009924" description="Uracil-DNA glycosylase">
    <location>
        <begin position="1"/>
        <end position="230"/>
    </location>
</feature>
<feature type="active site" description="Proton acceptor" evidence="1">
    <location>
        <position position="65"/>
    </location>
</feature>
<dbReference type="EC" id="3.2.2.27" evidence="1"/>
<dbReference type="EMBL" id="CP000422">
    <property type="protein sequence ID" value="ABJ67564.1"/>
    <property type="molecule type" value="Genomic_DNA"/>
</dbReference>
<dbReference type="RefSeq" id="WP_002834055.1">
    <property type="nucleotide sequence ID" value="NC_008525.1"/>
</dbReference>
<dbReference type="SMR" id="Q03GV8"/>
<dbReference type="STRING" id="278197.PEPE_0469"/>
<dbReference type="GeneID" id="33063060"/>
<dbReference type="KEGG" id="ppe:PEPE_0469"/>
<dbReference type="eggNOG" id="COG0692">
    <property type="taxonomic scope" value="Bacteria"/>
</dbReference>
<dbReference type="HOGENOM" id="CLU_032162_3_1_9"/>
<dbReference type="OrthoDB" id="9804372at2"/>
<dbReference type="Proteomes" id="UP000000773">
    <property type="component" value="Chromosome"/>
</dbReference>
<dbReference type="GO" id="GO:0005737">
    <property type="term" value="C:cytoplasm"/>
    <property type="evidence" value="ECO:0007669"/>
    <property type="project" value="UniProtKB-SubCell"/>
</dbReference>
<dbReference type="GO" id="GO:0004844">
    <property type="term" value="F:uracil DNA N-glycosylase activity"/>
    <property type="evidence" value="ECO:0007669"/>
    <property type="project" value="UniProtKB-UniRule"/>
</dbReference>
<dbReference type="GO" id="GO:0097510">
    <property type="term" value="P:base-excision repair, AP site formation via deaminated base removal"/>
    <property type="evidence" value="ECO:0007669"/>
    <property type="project" value="TreeGrafter"/>
</dbReference>
<dbReference type="CDD" id="cd10027">
    <property type="entry name" value="UDG-F1-like"/>
    <property type="match status" value="1"/>
</dbReference>
<dbReference type="FunFam" id="3.40.470.10:FF:000001">
    <property type="entry name" value="Uracil-DNA glycosylase"/>
    <property type="match status" value="1"/>
</dbReference>
<dbReference type="Gene3D" id="3.40.470.10">
    <property type="entry name" value="Uracil-DNA glycosylase-like domain"/>
    <property type="match status" value="1"/>
</dbReference>
<dbReference type="HAMAP" id="MF_00148">
    <property type="entry name" value="UDG"/>
    <property type="match status" value="1"/>
</dbReference>
<dbReference type="InterPro" id="IPR002043">
    <property type="entry name" value="UDG_fam1"/>
</dbReference>
<dbReference type="InterPro" id="IPR018085">
    <property type="entry name" value="Ura-DNA_Glyclase_AS"/>
</dbReference>
<dbReference type="InterPro" id="IPR005122">
    <property type="entry name" value="Uracil-DNA_glycosylase-like"/>
</dbReference>
<dbReference type="InterPro" id="IPR036895">
    <property type="entry name" value="Uracil-DNA_glycosylase-like_sf"/>
</dbReference>
<dbReference type="NCBIfam" id="NF003588">
    <property type="entry name" value="PRK05254.1-1"/>
    <property type="match status" value="1"/>
</dbReference>
<dbReference type="NCBIfam" id="NF003589">
    <property type="entry name" value="PRK05254.1-2"/>
    <property type="match status" value="1"/>
</dbReference>
<dbReference type="NCBIfam" id="NF003591">
    <property type="entry name" value="PRK05254.1-4"/>
    <property type="match status" value="1"/>
</dbReference>
<dbReference type="NCBIfam" id="NF003592">
    <property type="entry name" value="PRK05254.1-5"/>
    <property type="match status" value="1"/>
</dbReference>
<dbReference type="NCBIfam" id="TIGR00628">
    <property type="entry name" value="ung"/>
    <property type="match status" value="1"/>
</dbReference>
<dbReference type="PANTHER" id="PTHR11264">
    <property type="entry name" value="URACIL-DNA GLYCOSYLASE"/>
    <property type="match status" value="1"/>
</dbReference>
<dbReference type="PANTHER" id="PTHR11264:SF0">
    <property type="entry name" value="URACIL-DNA GLYCOSYLASE"/>
    <property type="match status" value="1"/>
</dbReference>
<dbReference type="Pfam" id="PF03167">
    <property type="entry name" value="UDG"/>
    <property type="match status" value="1"/>
</dbReference>
<dbReference type="SMART" id="SM00986">
    <property type="entry name" value="UDG"/>
    <property type="match status" value="1"/>
</dbReference>
<dbReference type="SMART" id="SM00987">
    <property type="entry name" value="UreE_C"/>
    <property type="match status" value="1"/>
</dbReference>
<dbReference type="SUPFAM" id="SSF52141">
    <property type="entry name" value="Uracil-DNA glycosylase-like"/>
    <property type="match status" value="1"/>
</dbReference>
<dbReference type="PROSITE" id="PS00130">
    <property type="entry name" value="U_DNA_GLYCOSYLASE"/>
    <property type="match status" value="1"/>
</dbReference>
<organism>
    <name type="scientific">Pediococcus pentosaceus (strain ATCC 25745 / CCUG 21536 / LMG 10740 / 183-1w)</name>
    <dbReference type="NCBI Taxonomy" id="278197"/>
    <lineage>
        <taxon>Bacteria</taxon>
        <taxon>Bacillati</taxon>
        <taxon>Bacillota</taxon>
        <taxon>Bacilli</taxon>
        <taxon>Lactobacillales</taxon>
        <taxon>Lactobacillaceae</taxon>
        <taxon>Pediococcus</taxon>
    </lineage>
</organism>